<accession>Q9DCB1</accession>
<accession>Q7M737</accession>
<accession>Q99JU1</accession>
<evidence type="ECO:0000250" key="1"/>
<evidence type="ECO:0000250" key="2">
    <source>
        <dbReference type="UniProtKB" id="Q15651"/>
    </source>
</evidence>
<evidence type="ECO:0000256" key="3">
    <source>
        <dbReference type="SAM" id="MobiDB-lite"/>
    </source>
</evidence>
<evidence type="ECO:0000269" key="4">
    <source>
    </source>
</evidence>
<evidence type="ECO:0000269" key="5">
    <source>
    </source>
</evidence>
<evidence type="ECO:0000269" key="6">
    <source>
    </source>
</evidence>
<evidence type="ECO:0000269" key="7">
    <source>
    </source>
</evidence>
<evidence type="ECO:0000269" key="8">
    <source>
    </source>
</evidence>
<evidence type="ECO:0000269" key="9">
    <source>
    </source>
</evidence>
<evidence type="ECO:0000303" key="10">
    <source>
    </source>
</evidence>
<evidence type="ECO:0000305" key="11"/>
<evidence type="ECO:0007744" key="12">
    <source>
    </source>
</evidence>
<keyword id="KW-0025">Alternative splicing</keyword>
<keyword id="KW-0156">Chromatin regulator</keyword>
<keyword id="KW-0238">DNA-binding</keyword>
<keyword id="KW-0539">Nucleus</keyword>
<keyword id="KW-0597">Phosphoprotein</keyword>
<keyword id="KW-1185">Reference proteome</keyword>
<sequence length="99" mass="10769">MPKRKSPENTEGKDGTKLTKQEPTRRSARLSAKPVPPKPESKPRKTSAKKEPGTKISRGAKGKKEEKQEAGEEGTAPSANGDTKVEEAQRTESIEKEGE</sequence>
<feature type="chain" id="PRO_0000232575" description="High mobility group nucleosome-binding domain-containing protein 3">
    <location>
        <begin position="1"/>
        <end position="99"/>
    </location>
</feature>
<feature type="region of interest" description="Disordered" evidence="3">
    <location>
        <begin position="1"/>
        <end position="99"/>
    </location>
</feature>
<feature type="compositionally biased region" description="Basic and acidic residues" evidence="3">
    <location>
        <begin position="1"/>
        <end position="25"/>
    </location>
</feature>
<feature type="compositionally biased region" description="Basic and acidic residues" evidence="3">
    <location>
        <begin position="39"/>
        <end position="53"/>
    </location>
</feature>
<feature type="compositionally biased region" description="Basic and acidic residues" evidence="3">
    <location>
        <begin position="83"/>
        <end position="99"/>
    </location>
</feature>
<feature type="modified residue" description="Phosphoserine" evidence="2">
    <location>
        <position position="6"/>
    </location>
</feature>
<feature type="modified residue" description="Phosphothreonine" evidence="2">
    <location>
        <position position="10"/>
    </location>
</feature>
<feature type="modified residue" description="Phosphoserine" evidence="2">
    <location>
        <position position="78"/>
    </location>
</feature>
<feature type="modified residue" description="Phosphoserine" evidence="12">
    <location>
        <position position="93"/>
    </location>
</feature>
<feature type="splice variant" id="VSP_017909" description="In isoform 2." evidence="11">
    <original>AP</original>
    <variation>EN</variation>
    <location>
        <begin position="76"/>
        <end position="77"/>
    </location>
</feature>
<feature type="splice variant" id="VSP_017910" description="In isoform 2." evidence="11">
    <location>
        <begin position="78"/>
        <end position="99"/>
    </location>
</feature>
<feature type="splice variant" id="VSP_017911" description="In isoform 3." evidence="10">
    <original>AQRTESIE</original>
    <variation>VLSTNTSH</variation>
    <location>
        <begin position="88"/>
        <end position="95"/>
    </location>
</feature>
<feature type="splice variant" id="VSP_017912" description="In isoform 3." evidence="10">
    <location>
        <begin position="96"/>
        <end position="99"/>
    </location>
</feature>
<gene>
    <name type="primary">Hmgn3</name>
</gene>
<name>HMGN3_MOUSE</name>
<comment type="function">
    <text evidence="5 6 7 8 9">Binds to nucleosomes, regulating chromatin structure and consequently, chromatin-dependent processes such as transcription, DNA replication and DNA repair. Affects both insulin and glucagon levels and modulates the expression of pancreatic genes involved in insulin secretion. Regulates the expression of the glucose transporter SLC2A2 by binding specifically to its promoter region and recruiting PDX1 and additional transcription factors. Regulates the expression of SLC6A9, a glycine transporter which regulates the glycine concentration in synaptic junctions in the central nervous system, by binding to its transcription start site. May play a role in ocular development and astrocyte function.</text>
</comment>
<comment type="subunit">
    <text evidence="2">Interacts with the ligand binding domain of the thyroid receptor (TR) (in vitro). Requires the presence of thyroid hormone for its interaction. Interacts with transcriptional regulator SEHBP. Interacts with nucleosomes.</text>
</comment>
<comment type="subcellular location">
    <subcellularLocation>
        <location evidence="1">Nucleus</location>
    </subcellularLocation>
</comment>
<comment type="alternative products">
    <event type="alternative splicing"/>
    <isoform>
        <id>Q9DCB1-1</id>
        <name>1</name>
        <name>HMGN3a</name>
        <sequence type="displayed"/>
    </isoform>
    <isoform>
        <id>Q9DCB1-2</id>
        <name>2</name>
        <name>HMGN3b</name>
        <sequence type="described" ref="VSP_017909 VSP_017910"/>
    </isoform>
    <isoform>
        <id>Q9DCB1-3</id>
        <name>3</name>
        <sequence type="described" ref="VSP_017911 VSP_017912"/>
    </isoform>
</comment>
<comment type="tissue specificity">
    <text evidence="4 5 6 7 8 9">Expressed in the brain, eye, prostate, thyroid, kidney, testis, glial cells and insulin-producing cells of the Langerhans pancreatic islets. In the brain, expressed in the lateral olfactory tract, anterior commissure, corpus callosum, internal capsule, fornix, stria medullans, optic tract, axon bundles, Purkinje cell layer and granular layer of the cerebellum. In retina, expressed in the nuclei of cells in the inner nuclear layer including amacrine, bipolar and horizontal neurons and in the nuclei of ganglion neurons. Detected at low levels in the liver.</text>
</comment>
<comment type="developmental stage">
    <text evidence="7">Transiently expressed in the stroma and endothelium of the cornea at birth. Subsequently expressed in the corneal epithelium and the inner nuclear and ganglion cell layers of the retina. The predominant form in developing ocular tissues is isoform 2, although isoform 1 is also detectable.</text>
</comment>
<comment type="disruption phenotype">
    <text evidence="8 9">Mice are viable and fertile. Mice have a mild diabetic phenotype and lower plasma glucagon levels. The overall shape of the islets, the location of the alpha cells in the mantle of the pancreatic islets or proliferation of pancreatic alpha cells are not affected.</text>
</comment>
<comment type="similarity">
    <text evidence="11">Belongs to the HMGN family.</text>
</comment>
<reference key="1">
    <citation type="journal article" date="2005" name="Science">
        <title>The transcriptional landscape of the mammalian genome.</title>
        <authorList>
            <person name="Carninci P."/>
            <person name="Kasukawa T."/>
            <person name="Katayama S."/>
            <person name="Gough J."/>
            <person name="Frith M.C."/>
            <person name="Maeda N."/>
            <person name="Oyama R."/>
            <person name="Ravasi T."/>
            <person name="Lenhard B."/>
            <person name="Wells C."/>
            <person name="Kodzius R."/>
            <person name="Shimokawa K."/>
            <person name="Bajic V.B."/>
            <person name="Brenner S.E."/>
            <person name="Batalov S."/>
            <person name="Forrest A.R."/>
            <person name="Zavolan M."/>
            <person name="Davis M.J."/>
            <person name="Wilming L.G."/>
            <person name="Aidinis V."/>
            <person name="Allen J.E."/>
            <person name="Ambesi-Impiombato A."/>
            <person name="Apweiler R."/>
            <person name="Aturaliya R.N."/>
            <person name="Bailey T.L."/>
            <person name="Bansal M."/>
            <person name="Baxter L."/>
            <person name="Beisel K.W."/>
            <person name="Bersano T."/>
            <person name="Bono H."/>
            <person name="Chalk A.M."/>
            <person name="Chiu K.P."/>
            <person name="Choudhary V."/>
            <person name="Christoffels A."/>
            <person name="Clutterbuck D.R."/>
            <person name="Crowe M.L."/>
            <person name="Dalla E."/>
            <person name="Dalrymple B.P."/>
            <person name="de Bono B."/>
            <person name="Della Gatta G."/>
            <person name="di Bernardo D."/>
            <person name="Down T."/>
            <person name="Engstrom P."/>
            <person name="Fagiolini M."/>
            <person name="Faulkner G."/>
            <person name="Fletcher C.F."/>
            <person name="Fukushima T."/>
            <person name="Furuno M."/>
            <person name="Futaki S."/>
            <person name="Gariboldi M."/>
            <person name="Georgii-Hemming P."/>
            <person name="Gingeras T.R."/>
            <person name="Gojobori T."/>
            <person name="Green R.E."/>
            <person name="Gustincich S."/>
            <person name="Harbers M."/>
            <person name="Hayashi Y."/>
            <person name="Hensch T.K."/>
            <person name="Hirokawa N."/>
            <person name="Hill D."/>
            <person name="Huminiecki L."/>
            <person name="Iacono M."/>
            <person name="Ikeo K."/>
            <person name="Iwama A."/>
            <person name="Ishikawa T."/>
            <person name="Jakt M."/>
            <person name="Kanapin A."/>
            <person name="Katoh M."/>
            <person name="Kawasawa Y."/>
            <person name="Kelso J."/>
            <person name="Kitamura H."/>
            <person name="Kitano H."/>
            <person name="Kollias G."/>
            <person name="Krishnan S.P."/>
            <person name="Kruger A."/>
            <person name="Kummerfeld S.K."/>
            <person name="Kurochkin I.V."/>
            <person name="Lareau L.F."/>
            <person name="Lazarevic D."/>
            <person name="Lipovich L."/>
            <person name="Liu J."/>
            <person name="Liuni S."/>
            <person name="McWilliam S."/>
            <person name="Madan Babu M."/>
            <person name="Madera M."/>
            <person name="Marchionni L."/>
            <person name="Matsuda H."/>
            <person name="Matsuzawa S."/>
            <person name="Miki H."/>
            <person name="Mignone F."/>
            <person name="Miyake S."/>
            <person name="Morris K."/>
            <person name="Mottagui-Tabar S."/>
            <person name="Mulder N."/>
            <person name="Nakano N."/>
            <person name="Nakauchi H."/>
            <person name="Ng P."/>
            <person name="Nilsson R."/>
            <person name="Nishiguchi S."/>
            <person name="Nishikawa S."/>
            <person name="Nori F."/>
            <person name="Ohara O."/>
            <person name="Okazaki Y."/>
            <person name="Orlando V."/>
            <person name="Pang K.C."/>
            <person name="Pavan W.J."/>
            <person name="Pavesi G."/>
            <person name="Pesole G."/>
            <person name="Petrovsky N."/>
            <person name="Piazza S."/>
            <person name="Reed J."/>
            <person name="Reid J.F."/>
            <person name="Ring B.Z."/>
            <person name="Ringwald M."/>
            <person name="Rost B."/>
            <person name="Ruan Y."/>
            <person name="Salzberg S.L."/>
            <person name="Sandelin A."/>
            <person name="Schneider C."/>
            <person name="Schoenbach C."/>
            <person name="Sekiguchi K."/>
            <person name="Semple C.A."/>
            <person name="Seno S."/>
            <person name="Sessa L."/>
            <person name="Sheng Y."/>
            <person name="Shibata Y."/>
            <person name="Shimada H."/>
            <person name="Shimada K."/>
            <person name="Silva D."/>
            <person name="Sinclair B."/>
            <person name="Sperling S."/>
            <person name="Stupka E."/>
            <person name="Sugiura K."/>
            <person name="Sultana R."/>
            <person name="Takenaka Y."/>
            <person name="Taki K."/>
            <person name="Tammoja K."/>
            <person name="Tan S.L."/>
            <person name="Tang S."/>
            <person name="Taylor M.S."/>
            <person name="Tegner J."/>
            <person name="Teichmann S.A."/>
            <person name="Ueda H.R."/>
            <person name="van Nimwegen E."/>
            <person name="Verardo R."/>
            <person name="Wei C.L."/>
            <person name="Yagi K."/>
            <person name="Yamanishi H."/>
            <person name="Zabarovsky E."/>
            <person name="Zhu S."/>
            <person name="Zimmer A."/>
            <person name="Hide W."/>
            <person name="Bult C."/>
            <person name="Grimmond S.M."/>
            <person name="Teasdale R.D."/>
            <person name="Liu E.T."/>
            <person name="Brusic V."/>
            <person name="Quackenbush J."/>
            <person name="Wahlestedt C."/>
            <person name="Mattick J.S."/>
            <person name="Hume D.A."/>
            <person name="Kai C."/>
            <person name="Sasaki D."/>
            <person name="Tomaru Y."/>
            <person name="Fukuda S."/>
            <person name="Kanamori-Katayama M."/>
            <person name="Suzuki M."/>
            <person name="Aoki J."/>
            <person name="Arakawa T."/>
            <person name="Iida J."/>
            <person name="Imamura K."/>
            <person name="Itoh M."/>
            <person name="Kato T."/>
            <person name="Kawaji H."/>
            <person name="Kawagashira N."/>
            <person name="Kawashima T."/>
            <person name="Kojima M."/>
            <person name="Kondo S."/>
            <person name="Konno H."/>
            <person name="Nakano K."/>
            <person name="Ninomiya N."/>
            <person name="Nishio T."/>
            <person name="Okada M."/>
            <person name="Plessy C."/>
            <person name="Shibata K."/>
            <person name="Shiraki T."/>
            <person name="Suzuki S."/>
            <person name="Tagami M."/>
            <person name="Waki K."/>
            <person name="Watahiki A."/>
            <person name="Okamura-Oho Y."/>
            <person name="Suzuki H."/>
            <person name="Kawai J."/>
            <person name="Hayashizaki Y."/>
        </authorList>
    </citation>
    <scope>NUCLEOTIDE SEQUENCE [LARGE SCALE MRNA] (ISOFORM 1)</scope>
    <source>
        <strain>C57BL/6J</strain>
        <tissue>Bone marrow</tissue>
        <tissue>Brain</tissue>
    </source>
</reference>
<reference key="2">
    <citation type="journal article" date="2004" name="Genome Res.">
        <title>The status, quality, and expansion of the NIH full-length cDNA project: the Mammalian Gene Collection (MGC).</title>
        <authorList>
            <consortium name="The MGC Project Team"/>
        </authorList>
    </citation>
    <scope>NUCLEOTIDE SEQUENCE [LARGE SCALE MRNA] (ISOFORM 3)</scope>
    <source>
        <strain>FVB/N</strain>
        <tissue>Mammary gland</tissue>
    </source>
</reference>
<reference key="3">
    <citation type="journal article" date="2001" name="J. Biol. Chem.">
        <title>HMGN3a and HMGN3b, two protein isoforms with a tissue-specific expression pattern, expand the cellular repertoire of nucleosome-binding proteins.</title>
        <authorList>
            <person name="West K.L."/>
            <person name="Ito Y."/>
            <person name="Birger Y."/>
            <person name="Postnikov Y."/>
            <person name="Shirakawa H."/>
            <person name="Bustin M."/>
        </authorList>
    </citation>
    <scope>ALTERNATIVE SPLICING</scope>
    <scope>TISSUE SPECIFICITY</scope>
</reference>
<reference key="4">
    <citation type="journal article" date="2002" name="J. Histochem. Cytochem.">
        <title>Immunohistochemical localization of the nucleosome-binding protein HMGN3 in mouse brain.</title>
        <authorList>
            <person name="Ito Y."/>
            <person name="Bustin M."/>
        </authorList>
    </citation>
    <scope>FUNCTION</scope>
    <scope>TISSUE SPECIFICITY</scope>
</reference>
<reference key="5">
    <citation type="journal article" date="2004" name="Mol. Cell. Biol.">
        <title>Chromosomal proteins HMGN3a and HMGN3b regulate the expression of glycine transporter 1.</title>
        <authorList>
            <person name="West K.L."/>
            <person name="Castellini M.A."/>
            <person name="Duncan M.K."/>
            <person name="Bustin M."/>
        </authorList>
    </citation>
    <scope>FUNCTION</scope>
    <scope>TISSUE SPECIFICITY</scope>
</reference>
<reference key="6">
    <citation type="journal article" date="2008" name="Gene Expr. Patterns">
        <title>Differential expression of the HMGN family of chromatin proteins during ocular development.</title>
        <authorList>
            <person name="Lucey M.M."/>
            <person name="Wang Y."/>
            <person name="Bustin M."/>
            <person name="Duncan M.K."/>
        </authorList>
    </citation>
    <scope>FUNCTION</scope>
    <scope>TISSUE SPECIFICITY</scope>
    <scope>DEVELOPMENTAL STAGE</scope>
</reference>
<reference key="7">
    <citation type="journal article" date="2009" name="Mol. Cell. Biol.">
        <title>The nucleosome binding protein HMGN3 modulates the transcription profile of pancreatic beta cells and affects insulin secretion.</title>
        <authorList>
            <person name="Ueda T."/>
            <person name="Furusawa T."/>
            <person name="Kurahashi T."/>
            <person name="Tessarollo L."/>
            <person name="Bustin M."/>
        </authorList>
    </citation>
    <scope>FUNCTION</scope>
    <scope>TISSUE SPECIFICITY</scope>
    <scope>DISRUPTION PHENOTYPE</scope>
</reference>
<reference key="8">
    <citation type="journal article" date="2010" name="Cell">
        <title>A tissue-specific atlas of mouse protein phosphorylation and expression.</title>
        <authorList>
            <person name="Huttlin E.L."/>
            <person name="Jedrychowski M.P."/>
            <person name="Elias J.E."/>
            <person name="Goswami T."/>
            <person name="Rad R."/>
            <person name="Beausoleil S.A."/>
            <person name="Villen J."/>
            <person name="Haas W."/>
            <person name="Sowa M.E."/>
            <person name="Gygi S.P."/>
        </authorList>
    </citation>
    <scope>PHOSPHORYLATION [LARGE SCALE ANALYSIS] AT SER-93</scope>
    <scope>IDENTIFICATION BY MASS SPECTROMETRY [LARGE SCALE ANALYSIS]</scope>
    <source>
        <tissue>Brain</tissue>
    </source>
</reference>
<reference key="9">
    <citation type="journal article" date="2010" name="J. Cell. Biochem.">
        <title>The nucleosome binding protein HMGN3 is expressed in pancreatic alpha-cells and affects plasma glucagon levels in mice.</title>
        <authorList>
            <person name="Kurahashi T."/>
            <person name="Furusawa T."/>
            <person name="Ueda T."/>
            <person name="Bustin M."/>
        </authorList>
    </citation>
    <scope>FUNCTION</scope>
    <scope>TISSUE SPECIFICITY</scope>
    <scope>DISRUPTION PHENOTYPE</scope>
</reference>
<protein>
    <recommendedName>
        <fullName>High mobility group nucleosome-binding domain-containing protein 3</fullName>
    </recommendedName>
</protein>
<organism>
    <name type="scientific">Mus musculus</name>
    <name type="common">Mouse</name>
    <dbReference type="NCBI Taxonomy" id="10090"/>
    <lineage>
        <taxon>Eukaryota</taxon>
        <taxon>Metazoa</taxon>
        <taxon>Chordata</taxon>
        <taxon>Craniata</taxon>
        <taxon>Vertebrata</taxon>
        <taxon>Euteleostomi</taxon>
        <taxon>Mammalia</taxon>
        <taxon>Eutheria</taxon>
        <taxon>Euarchontoglires</taxon>
        <taxon>Glires</taxon>
        <taxon>Rodentia</taxon>
        <taxon>Myomorpha</taxon>
        <taxon>Muroidea</taxon>
        <taxon>Muridae</taxon>
        <taxon>Murinae</taxon>
        <taxon>Mus</taxon>
        <taxon>Mus</taxon>
    </lineage>
</organism>
<proteinExistence type="evidence at protein level"/>
<dbReference type="EMBL" id="AK002970">
    <property type="protein sequence ID" value="BAB22485.1"/>
    <property type="molecule type" value="mRNA"/>
</dbReference>
<dbReference type="EMBL" id="AK153223">
    <property type="protein sequence ID" value="BAE31816.1"/>
    <property type="molecule type" value="mRNA"/>
</dbReference>
<dbReference type="EMBL" id="BC005693">
    <property type="protein sequence ID" value="AAH05693.1"/>
    <property type="molecule type" value="mRNA"/>
</dbReference>
<dbReference type="EMBL" id="BK000004">
    <property type="protein sequence ID" value="DAA00393.1"/>
    <property type="molecule type" value="mRNA"/>
</dbReference>
<dbReference type="EMBL" id="BK000005">
    <property type="protein sequence ID" value="DAA00394.1"/>
    <property type="molecule type" value="mRNA"/>
</dbReference>
<dbReference type="CCDS" id="CCDS52872.1">
    <molecule id="Q9DCB1-1"/>
</dbReference>
<dbReference type="CCDS" id="CCDS52873.1">
    <molecule id="Q9DCB1-2"/>
</dbReference>
<dbReference type="RefSeq" id="NP_080398.1">
    <molecule id="Q9DCB1-1"/>
    <property type="nucleotide sequence ID" value="NM_026122.4"/>
</dbReference>
<dbReference type="RefSeq" id="NP_778249.1">
    <molecule id="Q9DCB1-2"/>
    <property type="nucleotide sequence ID" value="NM_175074.2"/>
</dbReference>
<dbReference type="BioGRID" id="220508">
    <property type="interactions" value="7"/>
</dbReference>
<dbReference type="FunCoup" id="Q9DCB1">
    <property type="interactions" value="1958"/>
</dbReference>
<dbReference type="STRING" id="10090.ENSMUSP00000124278"/>
<dbReference type="iPTMnet" id="Q9DCB1"/>
<dbReference type="PhosphoSitePlus" id="Q9DCB1"/>
<dbReference type="jPOST" id="Q9DCB1"/>
<dbReference type="PaxDb" id="10090-ENSMUSP00000124278"/>
<dbReference type="PeptideAtlas" id="Q9DCB1"/>
<dbReference type="ProteomicsDB" id="273150">
    <molecule id="Q9DCB1-1"/>
</dbReference>
<dbReference type="ProteomicsDB" id="273151">
    <molecule id="Q9DCB1-2"/>
</dbReference>
<dbReference type="ProteomicsDB" id="273152">
    <molecule id="Q9DCB1-3"/>
</dbReference>
<dbReference type="Pumba" id="Q9DCB1"/>
<dbReference type="TopDownProteomics" id="Q9DCB1-1">
    <molecule id="Q9DCB1-1"/>
</dbReference>
<dbReference type="TopDownProteomics" id="Q9DCB1-2">
    <molecule id="Q9DCB1-2"/>
</dbReference>
<dbReference type="Antibodypedia" id="3656">
    <property type="antibodies" value="163 antibodies from 24 providers"/>
</dbReference>
<dbReference type="DNASU" id="94353"/>
<dbReference type="Ensembl" id="ENSMUST00000161796.9">
    <molecule id="Q9DCB1-2"/>
    <property type="protein sequence ID" value="ENSMUSP00000125616.2"/>
    <property type="gene ID" value="ENSMUSG00000066456.15"/>
</dbReference>
<dbReference type="Ensembl" id="ENSMUST00000162246.9">
    <molecule id="Q9DCB1-1"/>
    <property type="protein sequence ID" value="ENSMUSP00000124278.2"/>
    <property type="gene ID" value="ENSMUSG00000066456.15"/>
</dbReference>
<dbReference type="Ensembl" id="ENSMUST00000185315.7">
    <molecule id="Q9DCB1-3"/>
    <property type="protein sequence ID" value="ENSMUSP00000140356.2"/>
    <property type="gene ID" value="ENSMUSG00000066456.15"/>
</dbReference>
<dbReference type="Ensembl" id="ENSMUST00000190154.2">
    <molecule id="Q9DCB1-3"/>
    <property type="protein sequence ID" value="ENSMUSP00000140247.2"/>
    <property type="gene ID" value="ENSMUSG00000066456.15"/>
</dbReference>
<dbReference type="GeneID" id="94353"/>
<dbReference type="KEGG" id="mmu:94353"/>
<dbReference type="UCSC" id="uc009qwc.3">
    <molecule id="Q9DCB1-3"/>
    <property type="organism name" value="mouse"/>
</dbReference>
<dbReference type="UCSC" id="uc009qwd.2">
    <molecule id="Q9DCB1-2"/>
    <property type="organism name" value="mouse"/>
</dbReference>
<dbReference type="UCSC" id="uc009qwe.2">
    <molecule id="Q9DCB1-1"/>
    <property type="organism name" value="mouse"/>
</dbReference>
<dbReference type="AGR" id="MGI:2138069"/>
<dbReference type="CTD" id="9324"/>
<dbReference type="MGI" id="MGI:2138069">
    <property type="gene designation" value="Hmgn3"/>
</dbReference>
<dbReference type="VEuPathDB" id="HostDB:ENSMUSG00000066456"/>
<dbReference type="eggNOG" id="ENOG502S1R1">
    <property type="taxonomic scope" value="Eukaryota"/>
</dbReference>
<dbReference type="GeneTree" id="ENSGT00950000182802"/>
<dbReference type="HOGENOM" id="CLU_141985_2_0_1"/>
<dbReference type="InParanoid" id="Q9DCB1"/>
<dbReference type="OMA" id="QARTEIC"/>
<dbReference type="PhylomeDB" id="Q9DCB1"/>
<dbReference type="BioGRID-ORCS" id="94353">
    <property type="hits" value="2 hits in 83 CRISPR screens"/>
</dbReference>
<dbReference type="ChiTaRS" id="Hmgn3">
    <property type="organism name" value="mouse"/>
</dbReference>
<dbReference type="PRO" id="PR:Q9DCB1"/>
<dbReference type="Proteomes" id="UP000000589">
    <property type="component" value="Chromosome 9"/>
</dbReference>
<dbReference type="RNAct" id="Q9DCB1">
    <property type="molecule type" value="protein"/>
</dbReference>
<dbReference type="Bgee" id="ENSMUSG00000066456">
    <property type="expression patterns" value="Expressed in lens of camera-type eye and 246 other cell types or tissues"/>
</dbReference>
<dbReference type="ExpressionAtlas" id="Q9DCB1">
    <property type="expression patterns" value="baseline and differential"/>
</dbReference>
<dbReference type="GO" id="GO:0000785">
    <property type="term" value="C:chromatin"/>
    <property type="evidence" value="ECO:0007669"/>
    <property type="project" value="InterPro"/>
</dbReference>
<dbReference type="GO" id="GO:0005654">
    <property type="term" value="C:nucleoplasm"/>
    <property type="evidence" value="ECO:0007669"/>
    <property type="project" value="Ensembl"/>
</dbReference>
<dbReference type="GO" id="GO:0005634">
    <property type="term" value="C:nucleus"/>
    <property type="evidence" value="ECO:0000314"/>
    <property type="project" value="MGI"/>
</dbReference>
<dbReference type="GO" id="GO:0003682">
    <property type="term" value="F:chromatin binding"/>
    <property type="evidence" value="ECO:0000314"/>
    <property type="project" value="MGI"/>
</dbReference>
<dbReference type="GO" id="GO:0031492">
    <property type="term" value="F:nucleosomal DNA binding"/>
    <property type="evidence" value="ECO:0007669"/>
    <property type="project" value="InterPro"/>
</dbReference>
<dbReference type="GO" id="GO:0006325">
    <property type="term" value="P:chromatin organization"/>
    <property type="evidence" value="ECO:0007669"/>
    <property type="project" value="UniProtKB-KW"/>
</dbReference>
<dbReference type="GO" id="GO:0045944">
    <property type="term" value="P:positive regulation of transcription by RNA polymerase II"/>
    <property type="evidence" value="ECO:0000314"/>
    <property type="project" value="MGI"/>
</dbReference>
<dbReference type="GO" id="GO:0061178">
    <property type="term" value="P:regulation of insulin secretion involved in cellular response to glucose stimulus"/>
    <property type="evidence" value="ECO:0000315"/>
    <property type="project" value="MGI"/>
</dbReference>
<dbReference type="GO" id="GO:0006357">
    <property type="term" value="P:regulation of transcription by RNA polymerase II"/>
    <property type="evidence" value="ECO:0000315"/>
    <property type="project" value="MGI"/>
</dbReference>
<dbReference type="GO" id="GO:0006366">
    <property type="term" value="P:transcription by RNA polymerase II"/>
    <property type="evidence" value="ECO:0000315"/>
    <property type="project" value="MGI"/>
</dbReference>
<dbReference type="InterPro" id="IPR000079">
    <property type="entry name" value="HMGN_fam"/>
</dbReference>
<dbReference type="PANTHER" id="PTHR23087:SF2">
    <property type="entry name" value="HIGH MOBILITY GROUP NUCLEOSOME-BINDING DOMAIN-CONTAINING PROTEIN 3"/>
    <property type="match status" value="1"/>
</dbReference>
<dbReference type="PANTHER" id="PTHR23087">
    <property type="entry name" value="NONHISTONE CHROMOSOMAL PROTEIN HMG"/>
    <property type="match status" value="1"/>
</dbReference>
<dbReference type="Pfam" id="PF01101">
    <property type="entry name" value="HMG14_17"/>
    <property type="match status" value="1"/>
</dbReference>
<dbReference type="PRINTS" id="PR00925">
    <property type="entry name" value="NONHISHMG17"/>
</dbReference>
<dbReference type="SMART" id="SM00527">
    <property type="entry name" value="HMG17"/>
    <property type="match status" value="1"/>
</dbReference>
<dbReference type="PROSITE" id="PS00355">
    <property type="entry name" value="HMG14_17"/>
    <property type="match status" value="1"/>
</dbReference>